<accession>B1JW14</accession>
<comment type="function">
    <text evidence="1">Catalyzes the ferrous insertion into protoporphyrin IX.</text>
</comment>
<comment type="catalytic activity">
    <reaction evidence="1">
        <text>heme b + 2 H(+) = protoporphyrin IX + Fe(2+)</text>
        <dbReference type="Rhea" id="RHEA:22584"/>
        <dbReference type="ChEBI" id="CHEBI:15378"/>
        <dbReference type="ChEBI" id="CHEBI:29033"/>
        <dbReference type="ChEBI" id="CHEBI:57306"/>
        <dbReference type="ChEBI" id="CHEBI:60344"/>
        <dbReference type="EC" id="4.98.1.1"/>
    </reaction>
</comment>
<comment type="pathway">
    <text evidence="1">Porphyrin-containing compound metabolism; protoheme biosynthesis; protoheme from protoporphyrin-IX: step 1/1.</text>
</comment>
<comment type="subcellular location">
    <subcellularLocation>
        <location evidence="1">Cytoplasm</location>
    </subcellularLocation>
</comment>
<comment type="similarity">
    <text evidence="1">Belongs to the ferrochelatase family.</text>
</comment>
<gene>
    <name evidence="1" type="primary">hemH</name>
    <name type="ordered locus">Bcenmc03_0716</name>
</gene>
<dbReference type="EC" id="4.98.1.1" evidence="1"/>
<dbReference type="EMBL" id="CP000958">
    <property type="protein sequence ID" value="ACA89894.1"/>
    <property type="molecule type" value="Genomic_DNA"/>
</dbReference>
<dbReference type="RefSeq" id="WP_006476844.1">
    <property type="nucleotide sequence ID" value="NC_010508.1"/>
</dbReference>
<dbReference type="SMR" id="B1JW14"/>
<dbReference type="GeneID" id="83047515"/>
<dbReference type="KEGG" id="bcm:Bcenmc03_0716"/>
<dbReference type="HOGENOM" id="CLU_018884_0_0_4"/>
<dbReference type="UniPathway" id="UPA00252">
    <property type="reaction ID" value="UER00325"/>
</dbReference>
<dbReference type="Proteomes" id="UP000002169">
    <property type="component" value="Chromosome 1"/>
</dbReference>
<dbReference type="GO" id="GO:0005737">
    <property type="term" value="C:cytoplasm"/>
    <property type="evidence" value="ECO:0007669"/>
    <property type="project" value="UniProtKB-SubCell"/>
</dbReference>
<dbReference type="GO" id="GO:0004325">
    <property type="term" value="F:ferrochelatase activity"/>
    <property type="evidence" value="ECO:0007669"/>
    <property type="project" value="UniProtKB-UniRule"/>
</dbReference>
<dbReference type="GO" id="GO:0046872">
    <property type="term" value="F:metal ion binding"/>
    <property type="evidence" value="ECO:0007669"/>
    <property type="project" value="UniProtKB-KW"/>
</dbReference>
<dbReference type="GO" id="GO:0006783">
    <property type="term" value="P:heme biosynthetic process"/>
    <property type="evidence" value="ECO:0007669"/>
    <property type="project" value="UniProtKB-UniRule"/>
</dbReference>
<dbReference type="CDD" id="cd00419">
    <property type="entry name" value="Ferrochelatase_C"/>
    <property type="match status" value="1"/>
</dbReference>
<dbReference type="CDD" id="cd03411">
    <property type="entry name" value="Ferrochelatase_N"/>
    <property type="match status" value="1"/>
</dbReference>
<dbReference type="FunFam" id="3.40.50.1400:FF:000002">
    <property type="entry name" value="Ferrochelatase"/>
    <property type="match status" value="1"/>
</dbReference>
<dbReference type="Gene3D" id="3.40.50.1400">
    <property type="match status" value="2"/>
</dbReference>
<dbReference type="HAMAP" id="MF_00323">
    <property type="entry name" value="Ferrochelatase"/>
    <property type="match status" value="1"/>
</dbReference>
<dbReference type="InterPro" id="IPR001015">
    <property type="entry name" value="Ferrochelatase"/>
</dbReference>
<dbReference type="InterPro" id="IPR019772">
    <property type="entry name" value="Ferrochelatase_AS"/>
</dbReference>
<dbReference type="InterPro" id="IPR033644">
    <property type="entry name" value="Ferrochelatase_C"/>
</dbReference>
<dbReference type="InterPro" id="IPR033659">
    <property type="entry name" value="Ferrochelatase_N"/>
</dbReference>
<dbReference type="NCBIfam" id="TIGR00109">
    <property type="entry name" value="hemH"/>
    <property type="match status" value="1"/>
</dbReference>
<dbReference type="PANTHER" id="PTHR11108">
    <property type="entry name" value="FERROCHELATASE"/>
    <property type="match status" value="1"/>
</dbReference>
<dbReference type="PANTHER" id="PTHR11108:SF1">
    <property type="entry name" value="FERROCHELATASE, MITOCHONDRIAL"/>
    <property type="match status" value="1"/>
</dbReference>
<dbReference type="Pfam" id="PF00762">
    <property type="entry name" value="Ferrochelatase"/>
    <property type="match status" value="1"/>
</dbReference>
<dbReference type="SUPFAM" id="SSF53800">
    <property type="entry name" value="Chelatase"/>
    <property type="match status" value="1"/>
</dbReference>
<dbReference type="PROSITE" id="PS00534">
    <property type="entry name" value="FERROCHELATASE"/>
    <property type="match status" value="1"/>
</dbReference>
<organism>
    <name type="scientific">Burkholderia orbicola (strain MC0-3)</name>
    <dbReference type="NCBI Taxonomy" id="406425"/>
    <lineage>
        <taxon>Bacteria</taxon>
        <taxon>Pseudomonadati</taxon>
        <taxon>Pseudomonadota</taxon>
        <taxon>Betaproteobacteria</taxon>
        <taxon>Burkholderiales</taxon>
        <taxon>Burkholderiaceae</taxon>
        <taxon>Burkholderia</taxon>
        <taxon>Burkholderia cepacia complex</taxon>
        <taxon>Burkholderia orbicola</taxon>
    </lineage>
</organism>
<protein>
    <recommendedName>
        <fullName evidence="1">Ferrochelatase</fullName>
        <ecNumber evidence="1">4.98.1.1</ecNumber>
    </recommendedName>
    <alternativeName>
        <fullName evidence="1">Heme synthase</fullName>
    </alternativeName>
    <alternativeName>
        <fullName evidence="1">Protoheme ferro-lyase</fullName>
    </alternativeName>
</protein>
<evidence type="ECO:0000255" key="1">
    <source>
        <dbReference type="HAMAP-Rule" id="MF_00323"/>
    </source>
</evidence>
<sequence>MRFDLEPPSSVAAAHRIGVLLINLGTPDAPTPRAVRRYLAEFLSDPRVVEIPQAVWQVLLRTLILPLRGRASAKKYAAVWMPEGSPLRVYTERQTDSVRHLLTSNGYHVMVDYAMRYGSPNISHALTQFKRAGVERVLLMPMYPQYSASTTATAFDAAFDALARMRNQPEVRTVRHYADHPAYIHALAEQVRQYWAQHGRPDFAAGDKLVLSFHGVPKRTLDLGDPYHDQCQQTGALLMAALGLSTTECRVTFQSRFGKAEWLQPYTAPTLREFGEAGVRRADVFCPGFTADCLETIEEIGMEVRDEFLAGGGKTFHRIPCLNGASAWIGALGEIVAENLQGWPVKAAQPEPVN</sequence>
<proteinExistence type="inferred from homology"/>
<feature type="chain" id="PRO_1000116033" description="Ferrochelatase">
    <location>
        <begin position="1"/>
        <end position="354"/>
    </location>
</feature>
<feature type="binding site" evidence="1">
    <location>
        <position position="214"/>
    </location>
    <ligand>
        <name>Fe cation</name>
        <dbReference type="ChEBI" id="CHEBI:24875"/>
    </ligand>
</feature>
<feature type="binding site" evidence="1">
    <location>
        <position position="295"/>
    </location>
    <ligand>
        <name>Fe cation</name>
        <dbReference type="ChEBI" id="CHEBI:24875"/>
    </ligand>
</feature>
<name>HEMH_BURO0</name>
<reference key="1">
    <citation type="submission" date="2008-02" db="EMBL/GenBank/DDBJ databases">
        <title>Complete sequence of chromosome 1 of Burkholderia cenocepacia MC0-3.</title>
        <authorList>
            <person name="Copeland A."/>
            <person name="Lucas S."/>
            <person name="Lapidus A."/>
            <person name="Barry K."/>
            <person name="Bruce D."/>
            <person name="Goodwin L."/>
            <person name="Glavina del Rio T."/>
            <person name="Dalin E."/>
            <person name="Tice H."/>
            <person name="Pitluck S."/>
            <person name="Chain P."/>
            <person name="Malfatti S."/>
            <person name="Shin M."/>
            <person name="Vergez L."/>
            <person name="Schmutz J."/>
            <person name="Larimer F."/>
            <person name="Land M."/>
            <person name="Hauser L."/>
            <person name="Kyrpides N."/>
            <person name="Mikhailova N."/>
            <person name="Tiedje J."/>
            <person name="Richardson P."/>
        </authorList>
    </citation>
    <scope>NUCLEOTIDE SEQUENCE [LARGE SCALE GENOMIC DNA]</scope>
    <source>
        <strain>MC0-3</strain>
    </source>
</reference>
<keyword id="KW-0963">Cytoplasm</keyword>
<keyword id="KW-0350">Heme biosynthesis</keyword>
<keyword id="KW-0408">Iron</keyword>
<keyword id="KW-0456">Lyase</keyword>
<keyword id="KW-0479">Metal-binding</keyword>
<keyword id="KW-0627">Porphyrin biosynthesis</keyword>